<keyword id="KW-0309">Germination</keyword>
<keyword id="KW-0472">Membrane</keyword>
<keyword id="KW-0812">Transmembrane</keyword>
<keyword id="KW-1133">Transmembrane helix</keyword>
<feature type="chain" id="PRO_0000425703" description="Spore germination protein GerQA">
    <location>
        <begin position="1"/>
        <end position="499"/>
    </location>
</feature>
<feature type="transmembrane region" description="Helical" evidence="1">
    <location>
        <begin position="285"/>
        <end position="305"/>
    </location>
</feature>
<feature type="transmembrane region" description="Helical" evidence="1">
    <location>
        <begin position="376"/>
        <end position="396"/>
    </location>
</feature>
<feature type="transmembrane region" description="Helical" evidence="1">
    <location>
        <begin position="409"/>
        <end position="429"/>
    </location>
</feature>
<reference key="1">
    <citation type="journal article" date="2002" name="Microbiology">
        <title>Germination of Bacillus cereus spores in response to L-alanine and to inosine: the roles of gerL and gerQ operons.</title>
        <authorList>
            <person name="Barlass P.J."/>
            <person name="Houston C.W."/>
            <person name="Clements M.O."/>
            <person name="Moir A."/>
        </authorList>
    </citation>
    <scope>NUCLEOTIDE SEQUENCE [GENOMIC DNA]</scope>
    <scope>FUNCTION</scope>
    <source>
        <strain>ATCC 10876 / DSM 9378 / NRRL B-569</strain>
    </source>
</reference>
<accession>Q93LK9</accession>
<proteinExistence type="inferred from homology"/>
<comment type="function">
    <text evidence="2">Required for the germination response to inosine. Has no role in L-alanine germination.</text>
</comment>
<comment type="subcellular location">
    <subcellularLocation>
        <location evidence="3">Membrane</location>
        <topology evidence="3">Multi-pass membrane protein</topology>
    </subcellularLocation>
</comment>
<comment type="similarity">
    <text evidence="3">Belongs to the GerABKA family.</text>
</comment>
<name>GERQA_BACCE</name>
<organism>
    <name type="scientific">Bacillus cereus</name>
    <dbReference type="NCBI Taxonomy" id="1396"/>
    <lineage>
        <taxon>Bacteria</taxon>
        <taxon>Bacillati</taxon>
        <taxon>Bacillota</taxon>
        <taxon>Bacilli</taxon>
        <taxon>Bacillales</taxon>
        <taxon>Bacillaceae</taxon>
        <taxon>Bacillus</taxon>
        <taxon>Bacillus cereus group</taxon>
    </lineage>
</organism>
<protein>
    <recommendedName>
        <fullName>Spore germination protein GerQA</fullName>
    </recommendedName>
</protein>
<gene>
    <name type="primary">gerQA</name>
</gene>
<sequence length="499" mass="56786">MKPYGKIPDNSIKSLQDLMQLLKKSKDFITLEIASNNSSIVISYFRTLIDVNIFHEEVLTYIKEKSFNSLQDIHSVLPFENSKITNQIEDIQDSILNGYILIQYDTDKLNCLLVNVSKKEKRDITKAEIEYNIVGPQIAFVEDLDVNLNLVRRKLPTPYLQMKELKVGSLSNTTVAIVFIEGIVNDQNLQEIIKRVSQIKTDHVLDSTYLMQLIADNPNSIFPQFLNTERPDRVAAVLAEGKIALFVDGSPYAITLPTTLIDFFSTTEDYTMPWIIASFFRLLRLFAFIFSVLTTPLYVSILTYHYELIPKELLETLIISRSKVPFPPLIEALFLEITIELLREAGARLPTKVGLTVGIVGGIVIGQASVEASLTSNVLIIIVALSALSSFTAPIYRIGNTIRVIRFPFIISAHLLGLLGIVLTSSLLLARLLRTESLRRPYLFPFYPTRPTDWKDSIIRMPISAMFRRPIFSRSKQRFRFNPEEVEKNKILSRNDFDD</sequence>
<evidence type="ECO:0000255" key="1"/>
<evidence type="ECO:0000269" key="2">
    <source>
    </source>
</evidence>
<evidence type="ECO:0000305" key="3"/>
<dbReference type="EMBL" id="AY037930">
    <property type="protein sequence ID" value="AAK63174.1"/>
    <property type="molecule type" value="Genomic_DNA"/>
</dbReference>
<dbReference type="RefSeq" id="WP_000806094.1">
    <property type="nucleotide sequence ID" value="NZ_VEIQ01000003.1"/>
</dbReference>
<dbReference type="SMR" id="Q93LK9"/>
<dbReference type="GO" id="GO:0016020">
    <property type="term" value="C:membrane"/>
    <property type="evidence" value="ECO:0007669"/>
    <property type="project" value="UniProtKB-SubCell"/>
</dbReference>
<dbReference type="GO" id="GO:0009847">
    <property type="term" value="P:spore germination"/>
    <property type="evidence" value="ECO:0007669"/>
    <property type="project" value="InterPro"/>
</dbReference>
<dbReference type="InterPro" id="IPR004995">
    <property type="entry name" value="Spore_Ger"/>
</dbReference>
<dbReference type="InterPro" id="IPR050768">
    <property type="entry name" value="UPF0353/GerABKA_families"/>
</dbReference>
<dbReference type="PANTHER" id="PTHR22550:SF5">
    <property type="entry name" value="LEUCINE ZIPPER PROTEIN 4"/>
    <property type="match status" value="1"/>
</dbReference>
<dbReference type="PANTHER" id="PTHR22550">
    <property type="entry name" value="SPORE GERMINATION PROTEIN"/>
    <property type="match status" value="1"/>
</dbReference>
<dbReference type="Pfam" id="PF03323">
    <property type="entry name" value="GerA"/>
    <property type="match status" value="1"/>
</dbReference>
<dbReference type="PIRSF" id="PIRSF005690">
    <property type="entry name" value="GerBA"/>
    <property type="match status" value="1"/>
</dbReference>